<dbReference type="EC" id="1.14.11.-" evidence="5 7 12 14 18"/>
<dbReference type="EC" id="1.14.11.29" evidence="3 5 7 12"/>
<dbReference type="EMBL" id="AJ310544">
    <property type="protein sequence ID" value="CAC42510.1"/>
    <property type="molecule type" value="mRNA"/>
</dbReference>
<dbReference type="EMBL" id="AY040565">
    <property type="protein sequence ID" value="AAK82943.1"/>
    <property type="molecule type" value="mRNA"/>
</dbReference>
<dbReference type="EMBL" id="AK291385">
    <property type="protein sequence ID" value="BAF84074.1"/>
    <property type="molecule type" value="mRNA"/>
</dbReference>
<dbReference type="EMBL" id="AL832506">
    <property type="status" value="NOT_ANNOTATED_CDS"/>
    <property type="molecule type" value="mRNA"/>
</dbReference>
<dbReference type="EMBL" id="AC008537">
    <property type="status" value="NOT_ANNOTATED_CDS"/>
    <property type="molecule type" value="Genomic_DNA"/>
</dbReference>
<dbReference type="EMBL" id="CH471126">
    <property type="protein sequence ID" value="EAW57008.1"/>
    <property type="molecule type" value="Genomic_DNA"/>
</dbReference>
<dbReference type="EMBL" id="BC001723">
    <property type="protein sequence ID" value="AAH01723.1"/>
    <property type="status" value="ALT_INIT"/>
    <property type="molecule type" value="mRNA"/>
</dbReference>
<dbReference type="EMBL" id="BC036051">
    <property type="protein sequence ID" value="AAH36051.1"/>
    <property type="molecule type" value="mRNA"/>
</dbReference>
<dbReference type="CCDS" id="CCDS12567.1">
    <molecule id="Q96KS0-1"/>
</dbReference>
<dbReference type="RefSeq" id="NP_444274.1">
    <molecule id="Q96KS0-1"/>
    <property type="nucleotide sequence ID" value="NM_053046.4"/>
</dbReference>
<dbReference type="RefSeq" id="NP_542770.2">
    <molecule id="Q96KS0-1"/>
    <property type="nucleotide sequence ID" value="NM_080732.4"/>
</dbReference>
<dbReference type="PDB" id="5V1B">
    <property type="method" value="X-ray"/>
    <property type="resolution" value="2.49 A"/>
    <property type="chains" value="A=167-403"/>
</dbReference>
<dbReference type="PDBsum" id="5V1B"/>
<dbReference type="SMR" id="Q96KS0"/>
<dbReference type="BioGRID" id="125184">
    <property type="interactions" value="38"/>
</dbReference>
<dbReference type="CORUM" id="Q96KS0"/>
<dbReference type="FunCoup" id="Q96KS0">
    <property type="interactions" value="2533"/>
</dbReference>
<dbReference type="IntAct" id="Q96KS0">
    <property type="interactions" value="10"/>
</dbReference>
<dbReference type="MINT" id="Q96KS0"/>
<dbReference type="STRING" id="9606.ENSP00000469686"/>
<dbReference type="BindingDB" id="Q96KS0"/>
<dbReference type="ChEMBL" id="CHEMBL3028"/>
<dbReference type="DrugBank" id="DB00126">
    <property type="generic name" value="Ascorbic acid"/>
</dbReference>
<dbReference type="DrugBank" id="DB11682">
    <property type="generic name" value="Daprodustat"/>
</dbReference>
<dbReference type="DrugBank" id="DB04847">
    <property type="generic name" value="Roxadustat"/>
</dbReference>
<dbReference type="DrugBank" id="DB12255">
    <property type="generic name" value="Vadadustat"/>
</dbReference>
<dbReference type="DrugCentral" id="Q96KS0"/>
<dbReference type="GuidetoPHARMACOLOGY" id="2832"/>
<dbReference type="GlyGen" id="Q96KS0">
    <property type="glycosylation" value="1 site, 1 O-linked glycan (1 site)"/>
</dbReference>
<dbReference type="iPTMnet" id="Q96KS0"/>
<dbReference type="PhosphoSitePlus" id="Q96KS0"/>
<dbReference type="BioMuta" id="EGLN2"/>
<dbReference type="DMDM" id="32129513"/>
<dbReference type="jPOST" id="Q96KS0"/>
<dbReference type="MassIVE" id="Q96KS0"/>
<dbReference type="PaxDb" id="9606-ENSP00000469686"/>
<dbReference type="PeptideAtlas" id="Q96KS0"/>
<dbReference type="ProteomicsDB" id="77112">
    <molecule id="Q96KS0-1"/>
</dbReference>
<dbReference type="ProteomicsDB" id="77113">
    <molecule id="Q96KS0-2"/>
</dbReference>
<dbReference type="Antibodypedia" id="66726">
    <property type="antibodies" value="440 antibodies from 32 providers"/>
</dbReference>
<dbReference type="DNASU" id="112398"/>
<dbReference type="Ensembl" id="ENST00000303961.9">
    <molecule id="Q96KS0-1"/>
    <property type="protein sequence ID" value="ENSP00000307080.3"/>
    <property type="gene ID" value="ENSG00000269858.6"/>
</dbReference>
<dbReference type="Ensembl" id="ENST00000406058.6">
    <molecule id="Q96KS0-1"/>
    <property type="protein sequence ID" value="ENSP00000385253.1"/>
    <property type="gene ID" value="ENSG00000269858.6"/>
</dbReference>
<dbReference type="Ensembl" id="ENST00000593726.5">
    <molecule id="Q96KS0-1"/>
    <property type="protein sequence ID" value="ENSP00000469686.1"/>
    <property type="gene ID" value="ENSG00000269858.6"/>
</dbReference>
<dbReference type="GeneID" id="112398"/>
<dbReference type="KEGG" id="hsa:112398"/>
<dbReference type="MANE-Select" id="ENST00000303961.9">
    <property type="protein sequence ID" value="ENSP00000307080.3"/>
    <property type="RefSeq nucleotide sequence ID" value="NM_080732.4"/>
    <property type="RefSeq protein sequence ID" value="NP_542770.2"/>
</dbReference>
<dbReference type="UCSC" id="uc002opg.5">
    <molecule id="Q96KS0-1"/>
    <property type="organism name" value="human"/>
</dbReference>
<dbReference type="AGR" id="HGNC:14660"/>
<dbReference type="CTD" id="112398"/>
<dbReference type="DisGeNET" id="112398"/>
<dbReference type="GeneCards" id="EGLN2"/>
<dbReference type="HGNC" id="HGNC:14660">
    <property type="gene designation" value="EGLN2"/>
</dbReference>
<dbReference type="HPA" id="ENSG00000269858">
    <property type="expression patterns" value="Tissue enhanced (testis)"/>
</dbReference>
<dbReference type="MalaCards" id="EGLN2"/>
<dbReference type="MIM" id="606424">
    <property type="type" value="gene"/>
</dbReference>
<dbReference type="neXtProt" id="NX_Q96KS0"/>
<dbReference type="OpenTargets" id="ENSG00000269858"/>
<dbReference type="PharmGKB" id="PA27671"/>
<dbReference type="VEuPathDB" id="HostDB:ENSG00000269858"/>
<dbReference type="eggNOG" id="KOG3710">
    <property type="taxonomic scope" value="Eukaryota"/>
</dbReference>
<dbReference type="GeneTree" id="ENSGT00940000160655"/>
<dbReference type="HOGENOM" id="CLU_063064_0_0_1"/>
<dbReference type="InParanoid" id="Q96KS0"/>
<dbReference type="OMA" id="AWQTACP"/>
<dbReference type="OrthoDB" id="5952526at2759"/>
<dbReference type="PAN-GO" id="Q96KS0">
    <property type="GO annotations" value="6 GO annotations based on evolutionary models"/>
</dbReference>
<dbReference type="PhylomeDB" id="Q96KS0"/>
<dbReference type="TreeFam" id="TF314595"/>
<dbReference type="BioCyc" id="MetaCyc:ENSG00000171570-MONOMER"/>
<dbReference type="BRENDA" id="1.14.11.2">
    <property type="organism ID" value="2681"/>
</dbReference>
<dbReference type="BRENDA" id="1.14.11.29">
    <property type="organism ID" value="2681"/>
</dbReference>
<dbReference type="PathwayCommons" id="Q96KS0"/>
<dbReference type="Reactome" id="R-HSA-1234176">
    <property type="pathway name" value="Oxygen-dependent proline hydroxylation of Hypoxia-inducible Factor Alpha"/>
</dbReference>
<dbReference type="SignaLink" id="Q96KS0"/>
<dbReference type="SIGNOR" id="Q96KS0"/>
<dbReference type="BioGRID-ORCS" id="112398">
    <property type="hits" value="159 hits in 1166 CRISPR screens"/>
</dbReference>
<dbReference type="GeneWiki" id="EGLN2"/>
<dbReference type="GenomeRNAi" id="112398"/>
<dbReference type="Pharos" id="Q96KS0">
    <property type="development level" value="Tclin"/>
</dbReference>
<dbReference type="PRO" id="PR:Q96KS0"/>
<dbReference type="Proteomes" id="UP000005640">
    <property type="component" value="Chromosome 19"/>
</dbReference>
<dbReference type="RNAct" id="Q96KS0">
    <property type="molecule type" value="protein"/>
</dbReference>
<dbReference type="Bgee" id="ENSG00000269858">
    <property type="expression patterns" value="Expressed in left testis and 98 other cell types or tissues"/>
</dbReference>
<dbReference type="ExpressionAtlas" id="Q96KS0">
    <property type="expression patterns" value="baseline and differential"/>
</dbReference>
<dbReference type="GO" id="GO:0005737">
    <property type="term" value="C:cytoplasm"/>
    <property type="evidence" value="ECO:0000318"/>
    <property type="project" value="GO_Central"/>
</dbReference>
<dbReference type="GO" id="GO:0005654">
    <property type="term" value="C:nucleoplasm"/>
    <property type="evidence" value="ECO:0000314"/>
    <property type="project" value="HPA"/>
</dbReference>
<dbReference type="GO" id="GO:0005634">
    <property type="term" value="C:nucleus"/>
    <property type="evidence" value="ECO:0000314"/>
    <property type="project" value="UniProtKB"/>
</dbReference>
<dbReference type="GO" id="GO:0016706">
    <property type="term" value="F:2-oxoglutarate-dependent dioxygenase activity"/>
    <property type="evidence" value="ECO:0000314"/>
    <property type="project" value="UniProtKB"/>
</dbReference>
<dbReference type="GO" id="GO:0008198">
    <property type="term" value="F:ferrous iron binding"/>
    <property type="evidence" value="ECO:0000314"/>
    <property type="project" value="UniProtKB"/>
</dbReference>
<dbReference type="GO" id="GO:0160082">
    <property type="term" value="F:hypoxia-inducible factor-proline dioxygenase activity"/>
    <property type="evidence" value="ECO:0007669"/>
    <property type="project" value="UniProtKB-EC"/>
</dbReference>
<dbReference type="GO" id="GO:0031418">
    <property type="term" value="F:L-ascorbic acid binding"/>
    <property type="evidence" value="ECO:0007669"/>
    <property type="project" value="UniProtKB-KW"/>
</dbReference>
<dbReference type="GO" id="GO:0019826">
    <property type="term" value="F:oxygen sensor activity"/>
    <property type="evidence" value="ECO:0000314"/>
    <property type="project" value="UniProtKB"/>
</dbReference>
<dbReference type="GO" id="GO:0031545">
    <property type="term" value="F:peptidyl-proline 4-dioxygenase activity"/>
    <property type="evidence" value="ECO:0000314"/>
    <property type="project" value="UniProtKB"/>
</dbReference>
<dbReference type="GO" id="GO:0045454">
    <property type="term" value="P:cell redox homeostasis"/>
    <property type="evidence" value="ECO:0000314"/>
    <property type="project" value="UniProtKB"/>
</dbReference>
<dbReference type="GO" id="GO:0071456">
    <property type="term" value="P:cellular response to hypoxia"/>
    <property type="evidence" value="ECO:0000318"/>
    <property type="project" value="GO_Central"/>
</dbReference>
<dbReference type="GO" id="GO:0030520">
    <property type="term" value="P:estrogen receptor signaling pathway"/>
    <property type="evidence" value="ECO:0000303"/>
    <property type="project" value="UniProtKB"/>
</dbReference>
<dbReference type="GO" id="GO:0018401">
    <property type="term" value="P:peptidyl-proline hydroxylation to 4-hydroxy-L-proline"/>
    <property type="evidence" value="ECO:0000314"/>
    <property type="project" value="UniProtKB"/>
</dbReference>
<dbReference type="GO" id="GO:0045732">
    <property type="term" value="P:positive regulation of protein catabolic process"/>
    <property type="evidence" value="ECO:0000314"/>
    <property type="project" value="UniProtKB"/>
</dbReference>
<dbReference type="GO" id="GO:0001558">
    <property type="term" value="P:regulation of cell growth"/>
    <property type="evidence" value="ECO:0000303"/>
    <property type="project" value="UniProtKB"/>
</dbReference>
<dbReference type="GO" id="GO:0043523">
    <property type="term" value="P:regulation of neuron apoptotic process"/>
    <property type="evidence" value="ECO:0000315"/>
    <property type="project" value="UniProtKB"/>
</dbReference>
<dbReference type="GO" id="GO:0001666">
    <property type="term" value="P:response to hypoxia"/>
    <property type="evidence" value="ECO:0000314"/>
    <property type="project" value="UniProtKB"/>
</dbReference>
<dbReference type="FunFam" id="2.60.120.620:FF:000005">
    <property type="entry name" value="Egl nine homolog 1"/>
    <property type="match status" value="1"/>
</dbReference>
<dbReference type="Gene3D" id="2.60.120.620">
    <property type="entry name" value="q2cbj1_9rhob like domain"/>
    <property type="match status" value="1"/>
</dbReference>
<dbReference type="InterPro" id="IPR051559">
    <property type="entry name" value="HIF_prolyl_hydroxylases"/>
</dbReference>
<dbReference type="InterPro" id="IPR005123">
    <property type="entry name" value="Oxoglu/Fe-dep_dioxygenase_dom"/>
</dbReference>
<dbReference type="InterPro" id="IPR006620">
    <property type="entry name" value="Pro_4_hyd_alph"/>
</dbReference>
<dbReference type="InterPro" id="IPR044862">
    <property type="entry name" value="Pro_4_hyd_alph_FE2OG_OXY"/>
</dbReference>
<dbReference type="PANTHER" id="PTHR12907">
    <property type="entry name" value="EGL NINE HOMOLOG-RELATED"/>
    <property type="match status" value="1"/>
</dbReference>
<dbReference type="PANTHER" id="PTHR12907:SF6">
    <property type="entry name" value="PROLYL HYDROXYLASE EGLN2"/>
    <property type="match status" value="1"/>
</dbReference>
<dbReference type="Pfam" id="PF13640">
    <property type="entry name" value="2OG-FeII_Oxy_3"/>
    <property type="match status" value="1"/>
</dbReference>
<dbReference type="SMART" id="SM00702">
    <property type="entry name" value="P4Hc"/>
    <property type="match status" value="1"/>
</dbReference>
<dbReference type="PROSITE" id="PS51471">
    <property type="entry name" value="FE2OG_OXY"/>
    <property type="match status" value="1"/>
</dbReference>
<sequence>MDSPCQPQPLSQALPQLPGSSSEPLEPEPGRARMGVESYLPCPLLPSYHCPGVPSEASAGSGTPRATATSTTASPLRDGFGGQDGGELRPLQSEGAAALVTKGCQRLAAQGARPEAPKRKWAEDGGDAPSPSKRPWARQENQEAEREGGMSCSCSSGSGEASAGLMEEALPSAPERLALDYIVPCMRYYGICVKDSFLGAALGGRVLAEVEALKRGGRLRDGQLVSQRAIPPRSIRGDQIAWVEGHEPGCRSIGALMAHVDAVIRHCAGRLGSYVINGRTKAMVACYPGNGLGYVRHVDNPHGDGRCITCIYYLNQNWDVKVHGGLLQIFPEGRPVVANIEPLFDRLLIFWSDRRNPHEVKPAYATRYAITVWYFDAKERAAAKDKYQLASGQKGVQVPVSQPPTPT</sequence>
<organism>
    <name type="scientific">Homo sapiens</name>
    <name type="common">Human</name>
    <dbReference type="NCBI Taxonomy" id="9606"/>
    <lineage>
        <taxon>Eukaryota</taxon>
        <taxon>Metazoa</taxon>
        <taxon>Chordata</taxon>
        <taxon>Craniata</taxon>
        <taxon>Vertebrata</taxon>
        <taxon>Euteleostomi</taxon>
        <taxon>Mammalia</taxon>
        <taxon>Eutheria</taxon>
        <taxon>Euarchontoglires</taxon>
        <taxon>Primates</taxon>
        <taxon>Haplorrhini</taxon>
        <taxon>Catarrhini</taxon>
        <taxon>Hominidae</taxon>
        <taxon>Homo</taxon>
    </lineage>
</organism>
<proteinExistence type="evidence at protein level"/>
<accession>Q96KS0</accession>
<accession>A8K5S0</accession>
<accession>Q8WWY4</accession>
<accession>Q9BV14</accession>
<comment type="function">
    <text evidence="1 5 7 9 12 13 14 15 18">Prolyl hydroxylase that mediates hydroxylation of proline residues in target proteins, such as ATF4, IKBKB, CEP192 and HIF1A (PubMed:11595184, PubMed:12039559, PubMed:15925519, PubMed:16509823, PubMed:17114296, PubMed:23932902). Target proteins are preferentially recognized via a LXXLAP motif (PubMed:11595184, PubMed:12039559, PubMed:15925519). Cellular oxygen sensor that catalyzes, under normoxic conditions, the post-translational formation of 4-hydroxyproline in hypoxia-inducible factor (HIF) alpha proteins (PubMed:11595184, PubMed:12039559, PubMed:12181324, PubMed:15925519, PubMed:19339211). Hydroxylates a specific proline found in each of the oxygen-dependent degradation (ODD) domains (N-terminal, NODD, and C-terminal, CODD) of HIF1A (PubMed:11595184, PubMed:12039559, PubMed:12181324, PubMed:15925519). Also hydroxylates HIF2A (PubMed:11595184, PubMed:12039559, PubMed:15925519). Has a preference for the CODD site for both HIF1A and HIF2A (PubMed:11595184, PubMed:12039559, PubMed:15925519). Hydroxylated HIFs are then targeted for proteasomal degradation via the von Hippel-Lindau ubiquitination complex (PubMed:11595184, PubMed:12039559, PubMed:15925519). Under hypoxic conditions, the hydroxylation reaction is attenuated allowing HIFs to escape degradation resulting in their translocation to the nucleus, heterodimerization with HIF1B, and increased expression of hypoxy-inducible genes (PubMed:11595184, PubMed:12039559, PubMed:15925519). EGLN2 is involved in regulating hypoxia tolerance and apoptosis in cardiac and skeletal muscle (PubMed:11595184, PubMed:12039559, PubMed:15925519). Also regulates susceptibility to normoxic oxidative neuronal death (PubMed:11595184, PubMed:12039559, PubMed:15925519). Links oxygen sensing to cell cycle and primary cilia formation by hydroxylating the critical centrosome component CEP192 which promotes its ubiquitination and subsequent proteasomal degradation (PubMed:23932902). Hydroxylates IKBKB, mediating NF-kappa-B activation in hypoxic conditions (PubMed:17114296). Also mediates hydroxylation of ATF4, leading to decreased protein stability of ATF4 (By similarity).</text>
</comment>
<comment type="catalytic activity">
    <reaction evidence="5 7 12 14 18">
        <text>L-prolyl-[protein] + 2-oxoglutarate + O2 = trans-4-hydroxy-L-prolyl-[protein] + succinate + CO2</text>
        <dbReference type="Rhea" id="RHEA:63484"/>
        <dbReference type="Rhea" id="RHEA-COMP:12408"/>
        <dbReference type="Rhea" id="RHEA-COMP:16354"/>
        <dbReference type="ChEBI" id="CHEBI:15379"/>
        <dbReference type="ChEBI" id="CHEBI:16526"/>
        <dbReference type="ChEBI" id="CHEBI:16810"/>
        <dbReference type="ChEBI" id="CHEBI:30031"/>
        <dbReference type="ChEBI" id="CHEBI:50342"/>
        <dbReference type="ChEBI" id="CHEBI:61965"/>
    </reaction>
    <physiologicalReaction direction="left-to-right" evidence="5 7 12 14 18">
        <dbReference type="Rhea" id="RHEA:63485"/>
    </physiologicalReaction>
</comment>
<comment type="catalytic activity">
    <reaction evidence="5 7 12">
        <text>L-prolyl-[hypoxia-inducible factor alpha subunit] + 2-oxoglutarate + O2 = trans-4-hydroxy-L-prolyl-[hypoxia-inducible factor alpha subunit] + succinate + CO2</text>
        <dbReference type="Rhea" id="RHEA:48400"/>
        <dbReference type="Rhea" id="RHEA-COMP:12093"/>
        <dbReference type="Rhea" id="RHEA-COMP:12094"/>
        <dbReference type="ChEBI" id="CHEBI:15379"/>
        <dbReference type="ChEBI" id="CHEBI:16526"/>
        <dbReference type="ChEBI" id="CHEBI:16810"/>
        <dbReference type="ChEBI" id="CHEBI:30031"/>
        <dbReference type="ChEBI" id="CHEBI:50342"/>
        <dbReference type="ChEBI" id="CHEBI:61965"/>
        <dbReference type="EC" id="1.14.11.29"/>
    </reaction>
</comment>
<comment type="cofactor">
    <cofactor evidence="3 12 19 25">
        <name>Fe(2+)</name>
        <dbReference type="ChEBI" id="CHEBI:29033"/>
    </cofactor>
    <text evidence="3 12 19 25">Binds 1 Fe(2+) ion per subunit.</text>
</comment>
<comment type="cofactor">
    <cofactor evidence="12">
        <name>L-ascorbate</name>
        <dbReference type="ChEBI" id="CHEBI:38290"/>
    </cofactor>
</comment>
<comment type="biophysicochemical properties">
    <kinetics>
        <KM evidence="12">20 uM for HIF1A DLDLEMLAPYIPMDDDFQL peptide (at pH 7.5 and 37 degrees Celsius)</KM>
        <KM evidence="12">50 uM for L-ascorbate (at pH 7.5 and 37 degrees Celsius)</KM>
        <KM evidence="12">1 uM for Fe(2+) (at pH 7.5 and 37 degrees Celsius)</KM>
    </kinetics>
</comment>
<comment type="subunit">
    <text evidence="13 17">Interacts (preferably isoform p40) with SIAH2; the interaction targets both SIAH2 isoforms for proteasomal degradation in vitro (PubMed:16509823). Interacts with LIMD1, WTIP and AJUBA (PubMed:22286099).</text>
</comment>
<comment type="interaction">
    <interactant intactId="EBI-726614">
        <id>Q96KS0</id>
    </interactant>
    <interactant intactId="EBI-447269">
        <id>Q16665</id>
        <label>HIF1A</label>
    </interactant>
    <organismsDiffer>false</organismsDiffer>
    <experiments>2</experiments>
</comment>
<comment type="subcellular location">
    <subcellularLocation>
        <location evidence="8 10 15 16">Nucleus</location>
    </subcellularLocation>
</comment>
<comment type="alternative products">
    <event type="alternative initiation"/>
    <isoform>
        <id>Q96KS0-1</id>
        <name>p43</name>
        <name>PHD1p43</name>
        <sequence type="displayed"/>
    </isoform>
    <isoform>
        <id>Q96KS0-2</id>
        <name>p40</name>
        <name>PHD1p40</name>
        <sequence type="described" ref="VSP_038836"/>
    </isoform>
</comment>
<comment type="tissue specificity">
    <text evidence="8">Expressed in adult and fetal heart, brain, liver, lung, skeletal muscle, and kidney. Also expressed in testis and placenta. Highest levels in adult brain, placenta, lung, kidney, and testis. Expressed in hormone responsive tissues, including normal and cancerous mammary, ovarian and prostate epithelium.</text>
</comment>
<comment type="induction">
    <text evidence="6 13">By estrogen (PubMed:11850811). Induced by proteasomal inhibitor MG132 (at protein level) (PubMed:16509823).</text>
</comment>
<comment type="induction">
    <molecule>Isoform p43</molecule>
    <text evidence="11">Induced by hypoxia leading to protein stability.</text>
</comment>
<comment type="induction">
    <molecule>Isoform p40</molecule>
    <text evidence="11">Repressed by hypoxia.</text>
</comment>
<comment type="domain">
    <text evidence="2">The Beta(2)beta(3) 'finger-like' loop domain is important for substrate (HIFs' CODD/NODD) selectivity.</text>
</comment>
<comment type="PTM">
    <text evidence="1">Ubiquitinated by SIAH1 and/or SIAH2 in response to the unfolded protein response (UPR), leading to its degradation.</text>
</comment>
<comment type="sequence caution" evidence="22">
    <conflict type="erroneous initiation">
        <sequence resource="EMBL-CDS" id="AAH01723"/>
    </conflict>
    <text>Extended N-terminus.</text>
</comment>
<name>EGLN2_HUMAN</name>
<gene>
    <name evidence="23" type="primary">EGLN2</name>
    <name evidence="21" type="synonym">EIT6</name>
</gene>
<keyword id="KW-0002">3D-structure</keyword>
<keyword id="KW-0024">Alternative initiation</keyword>
<keyword id="KW-0223">Dioxygenase</keyword>
<keyword id="KW-0408">Iron</keyword>
<keyword id="KW-0479">Metal-binding</keyword>
<keyword id="KW-0539">Nucleus</keyword>
<keyword id="KW-0560">Oxidoreductase</keyword>
<keyword id="KW-0597">Phosphoprotein</keyword>
<keyword id="KW-1267">Proteomics identification</keyword>
<keyword id="KW-1185">Reference proteome</keyword>
<keyword id="KW-0832">Ubl conjugation</keyword>
<keyword id="KW-0847">Vitamin C</keyword>
<reference key="1">
    <citation type="journal article" date="2001" name="Gene">
        <title>Characterization and comparative analysis of the EGLN gene family.</title>
        <authorList>
            <person name="Taylor M.S."/>
        </authorList>
    </citation>
    <scope>NUCLEOTIDE SEQUENCE [MRNA] (ISOFORM P43)</scope>
</reference>
<reference key="2">
    <citation type="journal article" date="2002" name="Oncogene">
        <title>Novel estrogen and tamoxifen induced genes identified by SAGE (Serial Analysis of Gene Expression).</title>
        <authorList>
            <person name="Seth P."/>
            <person name="Krop I."/>
            <person name="Porter D."/>
            <person name="Polyak K."/>
        </authorList>
    </citation>
    <scope>NUCLEOTIDE SEQUENCE [MRNA] (ISOFORM P43)</scope>
    <scope>INDUCTION</scope>
    <source>
        <tissue>Mammary cancer</tissue>
    </source>
</reference>
<reference key="3">
    <citation type="journal article" date="2004" name="Nat. Genet.">
        <title>Complete sequencing and characterization of 21,243 full-length human cDNAs.</title>
        <authorList>
            <person name="Ota T."/>
            <person name="Suzuki Y."/>
            <person name="Nishikawa T."/>
            <person name="Otsuki T."/>
            <person name="Sugiyama T."/>
            <person name="Irie R."/>
            <person name="Wakamatsu A."/>
            <person name="Hayashi K."/>
            <person name="Sato H."/>
            <person name="Nagai K."/>
            <person name="Kimura K."/>
            <person name="Makita H."/>
            <person name="Sekine M."/>
            <person name="Obayashi M."/>
            <person name="Nishi T."/>
            <person name="Shibahara T."/>
            <person name="Tanaka T."/>
            <person name="Ishii S."/>
            <person name="Yamamoto J."/>
            <person name="Saito K."/>
            <person name="Kawai Y."/>
            <person name="Isono Y."/>
            <person name="Nakamura Y."/>
            <person name="Nagahari K."/>
            <person name="Murakami K."/>
            <person name="Yasuda T."/>
            <person name="Iwayanagi T."/>
            <person name="Wagatsuma M."/>
            <person name="Shiratori A."/>
            <person name="Sudo H."/>
            <person name="Hosoiri T."/>
            <person name="Kaku Y."/>
            <person name="Kodaira H."/>
            <person name="Kondo H."/>
            <person name="Sugawara M."/>
            <person name="Takahashi M."/>
            <person name="Kanda K."/>
            <person name="Yokoi T."/>
            <person name="Furuya T."/>
            <person name="Kikkawa E."/>
            <person name="Omura Y."/>
            <person name="Abe K."/>
            <person name="Kamihara K."/>
            <person name="Katsuta N."/>
            <person name="Sato K."/>
            <person name="Tanikawa M."/>
            <person name="Yamazaki M."/>
            <person name="Ninomiya K."/>
            <person name="Ishibashi T."/>
            <person name="Yamashita H."/>
            <person name="Murakawa K."/>
            <person name="Fujimori K."/>
            <person name="Tanai H."/>
            <person name="Kimata M."/>
            <person name="Watanabe M."/>
            <person name="Hiraoka S."/>
            <person name="Chiba Y."/>
            <person name="Ishida S."/>
            <person name="Ono Y."/>
            <person name="Takiguchi S."/>
            <person name="Watanabe S."/>
            <person name="Yosida M."/>
            <person name="Hotuta T."/>
            <person name="Kusano J."/>
            <person name="Kanehori K."/>
            <person name="Takahashi-Fujii A."/>
            <person name="Hara H."/>
            <person name="Tanase T.-O."/>
            <person name="Nomura Y."/>
            <person name="Togiya S."/>
            <person name="Komai F."/>
            <person name="Hara R."/>
            <person name="Takeuchi K."/>
            <person name="Arita M."/>
            <person name="Imose N."/>
            <person name="Musashino K."/>
            <person name="Yuuki H."/>
            <person name="Oshima A."/>
            <person name="Sasaki N."/>
            <person name="Aotsuka S."/>
            <person name="Yoshikawa Y."/>
            <person name="Matsunawa H."/>
            <person name="Ichihara T."/>
            <person name="Shiohata N."/>
            <person name="Sano S."/>
            <person name="Moriya S."/>
            <person name="Momiyama H."/>
            <person name="Satoh N."/>
            <person name="Takami S."/>
            <person name="Terashima Y."/>
            <person name="Suzuki O."/>
            <person name="Nakagawa S."/>
            <person name="Senoh A."/>
            <person name="Mizoguchi H."/>
            <person name="Goto Y."/>
            <person name="Shimizu F."/>
            <person name="Wakebe H."/>
            <person name="Hishigaki H."/>
            <person name="Watanabe T."/>
            <person name="Sugiyama A."/>
            <person name="Takemoto M."/>
            <person name="Kawakami B."/>
            <person name="Yamazaki M."/>
            <person name="Watanabe K."/>
            <person name="Kumagai A."/>
            <person name="Itakura S."/>
            <person name="Fukuzumi Y."/>
            <person name="Fujimori Y."/>
            <person name="Komiyama M."/>
            <person name="Tashiro H."/>
            <person name="Tanigami A."/>
            <person name="Fujiwara T."/>
            <person name="Ono T."/>
            <person name="Yamada K."/>
            <person name="Fujii Y."/>
            <person name="Ozaki K."/>
            <person name="Hirao M."/>
            <person name="Ohmori Y."/>
            <person name="Kawabata A."/>
            <person name="Hikiji T."/>
            <person name="Kobatake N."/>
            <person name="Inagaki H."/>
            <person name="Ikema Y."/>
            <person name="Okamoto S."/>
            <person name="Okitani R."/>
            <person name="Kawakami T."/>
            <person name="Noguchi S."/>
            <person name="Itoh T."/>
            <person name="Shigeta K."/>
            <person name="Senba T."/>
            <person name="Matsumura K."/>
            <person name="Nakajima Y."/>
            <person name="Mizuno T."/>
            <person name="Morinaga M."/>
            <person name="Sasaki M."/>
            <person name="Togashi T."/>
            <person name="Oyama M."/>
            <person name="Hata H."/>
            <person name="Watanabe M."/>
            <person name="Komatsu T."/>
            <person name="Mizushima-Sugano J."/>
            <person name="Satoh T."/>
            <person name="Shirai Y."/>
            <person name="Takahashi Y."/>
            <person name="Nakagawa K."/>
            <person name="Okumura K."/>
            <person name="Nagase T."/>
            <person name="Nomura N."/>
            <person name="Kikuchi H."/>
            <person name="Masuho Y."/>
            <person name="Yamashita R."/>
            <person name="Nakai K."/>
            <person name="Yada T."/>
            <person name="Nakamura Y."/>
            <person name="Ohara O."/>
            <person name="Isogai T."/>
            <person name="Sugano S."/>
        </authorList>
    </citation>
    <scope>NUCLEOTIDE SEQUENCE [LARGE SCALE MRNA] (ISOFORM P43)</scope>
    <source>
        <tissue>Fetal brain</tissue>
    </source>
</reference>
<reference key="4">
    <citation type="journal article" date="2007" name="BMC Genomics">
        <title>The full-ORF clone resource of the German cDNA consortium.</title>
        <authorList>
            <person name="Bechtel S."/>
            <person name="Rosenfelder H."/>
            <person name="Duda A."/>
            <person name="Schmidt C.P."/>
            <person name="Ernst U."/>
            <person name="Wellenreuther R."/>
            <person name="Mehrle A."/>
            <person name="Schuster C."/>
            <person name="Bahr A."/>
            <person name="Bloecker H."/>
            <person name="Heubner D."/>
            <person name="Hoerlein A."/>
            <person name="Michel G."/>
            <person name="Wedler H."/>
            <person name="Koehrer K."/>
            <person name="Ottenwaelder B."/>
            <person name="Poustka A."/>
            <person name="Wiemann S."/>
            <person name="Schupp I."/>
        </authorList>
    </citation>
    <scope>NUCLEOTIDE SEQUENCE [LARGE SCALE MRNA] (ISOFORM P43)</scope>
    <source>
        <tissue>Endometrium</tissue>
    </source>
</reference>
<reference key="5">
    <citation type="journal article" date="2004" name="Nature">
        <title>The DNA sequence and biology of human chromosome 19.</title>
        <authorList>
            <person name="Grimwood J."/>
            <person name="Gordon L.A."/>
            <person name="Olsen A.S."/>
            <person name="Terry A."/>
            <person name="Schmutz J."/>
            <person name="Lamerdin J.E."/>
            <person name="Hellsten U."/>
            <person name="Goodstein D."/>
            <person name="Couronne O."/>
            <person name="Tran-Gyamfi M."/>
            <person name="Aerts A."/>
            <person name="Altherr M."/>
            <person name="Ashworth L."/>
            <person name="Bajorek E."/>
            <person name="Black S."/>
            <person name="Branscomb E."/>
            <person name="Caenepeel S."/>
            <person name="Carrano A.V."/>
            <person name="Caoile C."/>
            <person name="Chan Y.M."/>
            <person name="Christensen M."/>
            <person name="Cleland C.A."/>
            <person name="Copeland A."/>
            <person name="Dalin E."/>
            <person name="Dehal P."/>
            <person name="Denys M."/>
            <person name="Detter J.C."/>
            <person name="Escobar J."/>
            <person name="Flowers D."/>
            <person name="Fotopulos D."/>
            <person name="Garcia C."/>
            <person name="Georgescu A.M."/>
            <person name="Glavina T."/>
            <person name="Gomez M."/>
            <person name="Gonzales E."/>
            <person name="Groza M."/>
            <person name="Hammon N."/>
            <person name="Hawkins T."/>
            <person name="Haydu L."/>
            <person name="Ho I."/>
            <person name="Huang W."/>
            <person name="Israni S."/>
            <person name="Jett J."/>
            <person name="Kadner K."/>
            <person name="Kimball H."/>
            <person name="Kobayashi A."/>
            <person name="Larionov V."/>
            <person name="Leem S.-H."/>
            <person name="Lopez F."/>
            <person name="Lou Y."/>
            <person name="Lowry S."/>
            <person name="Malfatti S."/>
            <person name="Martinez D."/>
            <person name="McCready P.M."/>
            <person name="Medina C."/>
            <person name="Morgan J."/>
            <person name="Nelson K."/>
            <person name="Nolan M."/>
            <person name="Ovcharenko I."/>
            <person name="Pitluck S."/>
            <person name="Pollard M."/>
            <person name="Popkie A.P."/>
            <person name="Predki P."/>
            <person name="Quan G."/>
            <person name="Ramirez L."/>
            <person name="Rash S."/>
            <person name="Retterer J."/>
            <person name="Rodriguez A."/>
            <person name="Rogers S."/>
            <person name="Salamov A."/>
            <person name="Salazar A."/>
            <person name="She X."/>
            <person name="Smith D."/>
            <person name="Slezak T."/>
            <person name="Solovyev V."/>
            <person name="Thayer N."/>
            <person name="Tice H."/>
            <person name="Tsai M."/>
            <person name="Ustaszewska A."/>
            <person name="Vo N."/>
            <person name="Wagner M."/>
            <person name="Wheeler J."/>
            <person name="Wu K."/>
            <person name="Xie G."/>
            <person name="Yang J."/>
            <person name="Dubchak I."/>
            <person name="Furey T.S."/>
            <person name="DeJong P."/>
            <person name="Dickson M."/>
            <person name="Gordon D."/>
            <person name="Eichler E.E."/>
            <person name="Pennacchio L.A."/>
            <person name="Richardson P."/>
            <person name="Stubbs L."/>
            <person name="Rokhsar D.S."/>
            <person name="Myers R.M."/>
            <person name="Rubin E.M."/>
            <person name="Lucas S.M."/>
        </authorList>
    </citation>
    <scope>NUCLEOTIDE SEQUENCE [LARGE SCALE GENOMIC DNA]</scope>
</reference>
<reference key="6">
    <citation type="submission" date="2005-07" db="EMBL/GenBank/DDBJ databases">
        <authorList>
            <person name="Mural R.J."/>
            <person name="Istrail S."/>
            <person name="Sutton G.G."/>
            <person name="Florea L."/>
            <person name="Halpern A.L."/>
            <person name="Mobarry C.M."/>
            <person name="Lippert R."/>
            <person name="Walenz B."/>
            <person name="Shatkay H."/>
            <person name="Dew I."/>
            <person name="Miller J.R."/>
            <person name="Flanigan M.J."/>
            <person name="Edwards N.J."/>
            <person name="Bolanos R."/>
            <person name="Fasulo D."/>
            <person name="Halldorsson B.V."/>
            <person name="Hannenhalli S."/>
            <person name="Turner R."/>
            <person name="Yooseph S."/>
            <person name="Lu F."/>
            <person name="Nusskern D.R."/>
            <person name="Shue B.C."/>
            <person name="Zheng X.H."/>
            <person name="Zhong F."/>
            <person name="Delcher A.L."/>
            <person name="Huson D.H."/>
            <person name="Kravitz S.A."/>
            <person name="Mouchard L."/>
            <person name="Reinert K."/>
            <person name="Remington K.A."/>
            <person name="Clark A.G."/>
            <person name="Waterman M.S."/>
            <person name="Eichler E.E."/>
            <person name="Adams M.D."/>
            <person name="Hunkapiller M.W."/>
            <person name="Myers E.W."/>
            <person name="Venter J.C."/>
        </authorList>
    </citation>
    <scope>NUCLEOTIDE SEQUENCE [LARGE SCALE GENOMIC DNA]</scope>
</reference>
<reference key="7">
    <citation type="journal article" date="2004" name="Genome Res.">
        <title>The status, quality, and expansion of the NIH full-length cDNA project: the Mammalian Gene Collection (MGC).</title>
        <authorList>
            <consortium name="The MGC Project Team"/>
        </authorList>
    </citation>
    <scope>NUCLEOTIDE SEQUENCE [LARGE SCALE MRNA] (ISOFORM P43)</scope>
    <source>
        <tissue>Lung</tissue>
        <tissue>Testis</tissue>
    </source>
</reference>
<reference key="8">
    <citation type="journal article" date="2001" name="Cell">
        <title>HIF-1, O(2), and the 3 PHDs: how animal cells signal hypoxia to the nucleus.</title>
        <authorList>
            <person name="Semenza G.L."/>
        </authorList>
    </citation>
    <scope>REVIEW</scope>
</reference>
<reference key="9">
    <citation type="journal article" date="2001" name="Cell">
        <title>C. elegans EGL-9 and mammalian homologs define a family of dioxygenases that regulate HIF by prolyl hydroxylation.</title>
        <authorList>
            <person name="Epstein A.C.R."/>
            <person name="Gleadle J.M."/>
            <person name="McNeill L.A."/>
            <person name="Hewitson K.S."/>
            <person name="O'Rourke J."/>
            <person name="Mole D.R."/>
            <person name="Mukherji M."/>
            <person name="Metzen E."/>
            <person name="Wilson M.I."/>
            <person name="Dhanda A."/>
            <person name="Tian Y.M."/>
            <person name="Masson N."/>
            <person name="Hamilton D.L."/>
            <person name="Jaakkola P."/>
            <person name="Barstead R."/>
            <person name="Hodgkin J."/>
            <person name="Maxwell P.H."/>
            <person name="Pugh C.W."/>
            <person name="Schofield C.J."/>
            <person name="Ratcliffe P.J."/>
        </authorList>
    </citation>
    <scope>FUNCTION</scope>
    <scope>CATALYTIC ACTIVITY</scope>
    <scope>MUTAGENESIS OF HIS-358</scope>
</reference>
<reference key="10">
    <citation type="journal article" date="2002" name="Biochem. Biophys. Res. Commun.">
        <title>Overexpression of PH-4, a novel putative proline 4-hydroxylase, modulates activity of hypoxia-inducible transcription factors.</title>
        <authorList>
            <person name="Oehme F."/>
            <person name="Ellinghaus P."/>
            <person name="Kolkhof P."/>
            <person name="Smith T.J."/>
            <person name="Ramakrishnan S."/>
            <person name="Huetter J."/>
            <person name="Schramm M."/>
            <person name="Flamme I."/>
        </authorList>
    </citation>
    <scope>SUBCELLULAR LOCATION</scope>
    <scope>TISSUE SPECIFICITY</scope>
</reference>
<reference key="11">
    <citation type="journal article" date="2002" name="Bioorg. Med. Chem. Lett.">
        <title>The use of dioxygen by HIF prolyl hydroxylase (PHD1).</title>
        <authorList>
            <person name="McNeill L.A."/>
            <person name="Hewitson K.S."/>
            <person name="Gleadle J.M."/>
            <person name="Horsfall L.E."/>
            <person name="Oldham N.J."/>
            <person name="Maxwell P.H."/>
            <person name="Pugh C.W."/>
            <person name="Ratcliffe P.J."/>
            <person name="Schofield C.J."/>
        </authorList>
    </citation>
    <scope>FUNCTION</scope>
    <scope>CATALYTIC ACTIVITY</scope>
    <scope>MUTAGENESIS OF HIS-297; ASP-299; HIS-358 AND ARG-367</scope>
</reference>
<reference key="12">
    <citation type="journal article" date="2002" name="J. Biol. Chem.">
        <title>Sequence determinants in hypoxia-inducible factor-1alpha for hydroxylation by the prolyl hydroxylases PHD1, PHD2, and PHD3.</title>
        <authorList>
            <person name="Huang J."/>
            <person name="Zhao Q."/>
            <person name="Mooney S.M."/>
            <person name="Lee F.S."/>
        </authorList>
    </citation>
    <scope>FUNCTION</scope>
    <scope>SUBSTRATE RECOGNITION MOTIF</scope>
</reference>
<reference key="13">
    <citation type="journal article" date="2003" name="J. Cell Sci.">
        <title>Intracellular localisation of human HIF-1 alpha hydroxylases: implications for oxygen sensing.</title>
        <authorList>
            <person name="Metzen E."/>
            <person name="Berchner-Pfannschmidt U."/>
            <person name="Stengel P."/>
            <person name="Marxsen J.H."/>
            <person name="Stolze I."/>
            <person name="Klinger M."/>
            <person name="Huang W.Q."/>
            <person name="Wotzlaw C."/>
            <person name="Hellwig-Burgel T."/>
            <person name="Jelkmann W."/>
            <person name="Acker H."/>
            <person name="Fandrey J."/>
        </authorList>
    </citation>
    <scope>SUBCELLULAR LOCATION</scope>
    <scope>INDUCTION</scope>
</reference>
<reference key="14">
    <citation type="journal article" date="2004" name="J. Biol. Chem.">
        <title>Differential function of the prolyl hydroxylases PHD1, PHD2, and PHD3 in the regulation of hypoxia-inducible factor.</title>
        <authorList>
            <person name="Appelhoff R.J."/>
            <person name="Tian Y.M."/>
            <person name="Raval R.R."/>
            <person name="Turley H."/>
            <person name="Harris A.L."/>
            <person name="Pugh C.W."/>
            <person name="Ratcliffe P.J."/>
            <person name="Gleadle J.M."/>
        </authorList>
    </citation>
    <scope>INDUCTION</scope>
    <scope>SUBSTRATE SPECIFICITY</scope>
</reference>
<reference key="15">
    <citation type="journal article" date="2005" name="Protein Expr. Purif.">
        <title>Cloning and characterization of the rat HIF-1 alpha prolyl-4-hydroxylase-1 gene.</title>
        <authorList>
            <person name="Cobb R.R."/>
            <person name="McClary J."/>
            <person name="Manzana W."/>
            <person name="Finster S."/>
            <person name="Larsen B."/>
            <person name="Blasko E."/>
            <person name="Pearson J."/>
            <person name="Biancalana S."/>
            <person name="Kauser K."/>
            <person name="Bringmann P."/>
            <person name="Light D.R."/>
            <person name="Schirm S."/>
        </authorList>
    </citation>
    <scope>CATALYTIC ACTIVITY</scope>
    <scope>COFACTOR</scope>
    <scope>BIOPHYSICOCHEMICAL PROPERTIES</scope>
    <source>
        <tissue>Liver</tissue>
    </source>
</reference>
<reference key="16">
    <citation type="journal article" date="2006" name="Biochem. J.">
        <title>Characterization of different isoforms of the HIF prolyl hydroxylase PHD1 generated by alternative initiation.</title>
        <authorList>
            <person name="Tian Y.M."/>
            <person name="Mole D.R."/>
            <person name="Ratcliffe P.J."/>
            <person name="Gleadle J.M."/>
        </authorList>
    </citation>
    <scope>FUNCTION</scope>
    <scope>INTERACTION WITH SIAH2</scope>
    <scope>ALTERNATIVE INITIATION</scope>
    <scope>INDUCTION</scope>
    <scope>MUTAGENESIS OF MET-1 AND MET-34</scope>
</reference>
<reference key="17">
    <citation type="journal article" date="2006" name="Proc. Natl. Acad. Sci. U.S.A.">
        <title>Prolyl hydroxylase-1 negatively regulates IkappaB kinase-beta, giving insight into hypoxia-induced NFkappaB activity.</title>
        <authorList>
            <person name="Cummins E.P."/>
            <person name="Berra E."/>
            <person name="Comerford K.M."/>
            <person name="Ginouves A."/>
            <person name="Fitzgerald K.T."/>
            <person name="Seeballuck F."/>
            <person name="Godson C."/>
            <person name="Nielsen J.E."/>
            <person name="Moynagh P."/>
            <person name="Pouyssegur J."/>
            <person name="Taylor C.T."/>
        </authorList>
    </citation>
    <scope>FUNCTION</scope>
    <scope>CATALYTIC ACTIVITY</scope>
</reference>
<reference key="18">
    <citation type="journal article" date="2009" name="Biochem. Biophys. Res. Commun.">
        <title>Cellular oxygen sensing: Importins and exportins are mediators of intracellular localisation of prolyl-4-hydroxylases PHD1 and PHD2.</title>
        <authorList>
            <person name="Steinhoff A."/>
            <person name="Pientka F.K."/>
            <person name="Mockel S."/>
            <person name="Kettelhake A."/>
            <person name="Hartmann E."/>
            <person name="Kohler M."/>
            <person name="Depping R."/>
        </authorList>
    </citation>
    <scope>SUBCELLULAR LOCATION</scope>
</reference>
<reference key="19">
    <citation type="journal article" date="2009" name="Biochim. Biophys. Acta">
        <title>Role of the intracellular localization of HIF-prolyl hydroxylases.</title>
        <authorList>
            <person name="Yasumoto K."/>
            <person name="Kowata Y."/>
            <person name="Yoshida A."/>
            <person name="Torii S."/>
            <person name="Sogawa K."/>
        </authorList>
    </citation>
    <scope>SUBCELLULAR LOCATION</scope>
    <scope>FUNCTION</scope>
    <scope>MOTIF</scope>
    <scope>MUTAGENESIS OF LYS-102; ARG-106; ARG-113; ARG-119 AND ARG-134</scope>
</reference>
<reference key="20">
    <citation type="journal article" date="2011" name="Biochem. J.">
        <title>Biochemical characterization of human HIF hydroxylases using HIF protein substrates that contain all three hydroxylation sites.</title>
        <authorList>
            <person name="Pappalardi M.B."/>
            <person name="McNulty D.E."/>
            <person name="Martin J.D."/>
            <person name="Fisher K.E."/>
            <person name="Jiang Y."/>
            <person name="Burns M.C."/>
            <person name="Zhao H."/>
            <person name="Ho T."/>
            <person name="Sweitzer S."/>
            <person name="Schwartz B."/>
            <person name="Annan R.S."/>
            <person name="Copeland R.A."/>
            <person name="Tummino P.J."/>
            <person name="Luo L."/>
        </authorList>
    </citation>
    <scope>SUBSTRATE SPECIFICITY</scope>
    <scope>IDENTIFICATION BY MASS SPECTROMETRY</scope>
</reference>
<reference key="21">
    <citation type="journal article" date="2012" name="Nat. Cell Biol.">
        <title>The LIMD1 protein bridges an association between the prolyl hydroxylases and VHL to repress HIF-1 activity.</title>
        <authorList>
            <person name="Foxler D.E."/>
            <person name="Bridge K.S."/>
            <person name="James V."/>
            <person name="Webb T.M."/>
            <person name="Mee M."/>
            <person name="Wong S.C."/>
            <person name="Feng Y."/>
            <person name="Constantin-Teodosiu D."/>
            <person name="Petursdottir T.E."/>
            <person name="Bjornsson J."/>
            <person name="Ingvarsson S."/>
            <person name="Ratcliffe P.J."/>
            <person name="Longmore G.D."/>
            <person name="Sharp T.V."/>
        </authorList>
    </citation>
    <scope>INTERACTION WITH LIMD1; WTIP AND AJUBA</scope>
</reference>
<reference key="22">
    <citation type="journal article" date="2013" name="Dev. Cell">
        <title>PHD1 links cell-cycle progression to oxygen sensing through hydroxylation of the centrosomal protein Cep192.</title>
        <authorList>
            <person name="Moser S.C."/>
            <person name="Bensaddek D."/>
            <person name="Ortmann B."/>
            <person name="Maure J.F."/>
            <person name="Mudie S."/>
            <person name="Blow J.J."/>
            <person name="Lamond A.I."/>
            <person name="Swedlow J.R."/>
            <person name="Rocha S."/>
        </authorList>
    </citation>
    <scope>FUNCTION</scope>
    <scope>CATALYTIC ACTIVITY</scope>
</reference>
<reference key="23">
    <citation type="journal article" date="2013" name="J. Proteome Res.">
        <title>Toward a comprehensive characterization of a human cancer cell phosphoproteome.</title>
        <authorList>
            <person name="Zhou H."/>
            <person name="Di Palma S."/>
            <person name="Preisinger C."/>
            <person name="Peng M."/>
            <person name="Polat A.N."/>
            <person name="Heck A.J."/>
            <person name="Mohammed S."/>
        </authorList>
    </citation>
    <scope>PHOSPHORYLATION [LARGE SCALE ANALYSIS] AT SER-130</scope>
    <scope>IDENTIFICATION BY MASS SPECTROMETRY [LARGE SCALE ANALYSIS]</scope>
    <source>
        <tissue>Erythroleukemia</tissue>
    </source>
</reference>
<reference evidence="25" key="24">
    <citation type="journal article" date="2017" name="J. Med. Chem.">
        <title>1,2,4-Triazolo-[1,5-a]pyridine HIF Prolylhydroxylase Domain-1 (PHD-1) Inhibitors With a Novel Monodentate Binding Interaction.</title>
        <authorList>
            <person name="Ahmed S."/>
            <person name="Ayscough A."/>
            <person name="Barker G.R."/>
            <person name="Canning H.E."/>
            <person name="Davenport R."/>
            <person name="Downham R."/>
            <person name="Harrison D."/>
            <person name="Jenkins K."/>
            <person name="Kinsella N."/>
            <person name="Livermore D.G."/>
            <person name="Wright S."/>
            <person name="Ivetac A.D."/>
            <person name="Skene R."/>
            <person name="Wilkens S.J."/>
            <person name="Webster N.A."/>
            <person name="Hendrick A.G."/>
        </authorList>
    </citation>
    <scope>X-RAY CRYSTALLOGRAPHY (2.49 ANGSTROMS) OF 167-403 IN COMPLEX WITH INHIBITOR AND IRON</scope>
    <scope>COFACTOR</scope>
</reference>
<feature type="chain" id="PRO_0000206664" description="Prolyl hydroxylase EGLN2">
    <location>
        <begin position="1"/>
        <end position="407"/>
    </location>
</feature>
<feature type="domain" description="Fe2OG dioxygenase" evidence="3">
    <location>
        <begin position="278"/>
        <end position="376"/>
    </location>
</feature>
<feature type="region of interest" description="Disordered" evidence="4">
    <location>
        <begin position="1"/>
        <end position="34"/>
    </location>
</feature>
<feature type="region of interest" description="Disordered" evidence="4">
    <location>
        <begin position="50"/>
        <end position="89"/>
    </location>
</feature>
<feature type="region of interest" description="Disordered" evidence="4">
    <location>
        <begin position="108"/>
        <end position="157"/>
    </location>
</feature>
<feature type="region of interest" description="Beta(2)beta(3) 'finger-like' loop" evidence="2">
    <location>
        <begin position="225"/>
        <end position="235"/>
    </location>
</feature>
<feature type="short sequence motif" description="Bipartite nuclear localization signal" evidence="15">
    <location>
        <begin position="89"/>
        <end position="134"/>
    </location>
</feature>
<feature type="compositionally biased region" description="Low complexity" evidence="4">
    <location>
        <begin position="1"/>
        <end position="24"/>
    </location>
</feature>
<feature type="compositionally biased region" description="Low complexity" evidence="4">
    <location>
        <begin position="57"/>
        <end position="75"/>
    </location>
</feature>
<feature type="binding site" evidence="3 19 24">
    <location>
        <position position="297"/>
    </location>
    <ligand>
        <name>Fe cation</name>
        <dbReference type="ChEBI" id="CHEBI:24875"/>
    </ligand>
</feature>
<feature type="binding site" evidence="3 19 24">
    <location>
        <position position="299"/>
    </location>
    <ligand>
        <name>Fe cation</name>
        <dbReference type="ChEBI" id="CHEBI:24875"/>
    </ligand>
</feature>
<feature type="binding site" evidence="3 19 24">
    <location>
        <position position="358"/>
    </location>
    <ligand>
        <name>Fe cation</name>
        <dbReference type="ChEBI" id="CHEBI:24875"/>
    </ligand>
</feature>
<feature type="binding site" evidence="3">
    <location>
        <position position="367"/>
    </location>
    <ligand>
        <name>2-oxoglutarate</name>
        <dbReference type="ChEBI" id="CHEBI:16810"/>
    </ligand>
</feature>
<feature type="modified residue" description="Phosphoserine" evidence="26">
    <location>
        <position position="130"/>
    </location>
</feature>
<feature type="splice variant" id="VSP_038836" description="In isoform p40." evidence="22">
    <location>
        <begin position="1"/>
        <end position="33"/>
    </location>
</feature>
<feature type="mutagenesis site" description="Leads to expression of isoform p40 only." evidence="13">
    <original>M</original>
    <variation>A</variation>
    <location>
        <position position="1"/>
    </location>
</feature>
<feature type="mutagenesis site" description="Leads to expression of isoform p43 only." evidence="13">
    <original>M</original>
    <variation>A</variation>
    <location>
        <position position="34"/>
    </location>
</feature>
<feature type="mutagenesis site" description="Retained in the nucleus." evidence="15">
    <original>K</original>
    <variation>A</variation>
    <location>
        <position position="102"/>
    </location>
</feature>
<feature type="mutagenesis site" description="Retained in the nucleus." evidence="15">
    <original>R</original>
    <variation>A</variation>
    <location>
        <position position="106"/>
    </location>
</feature>
<feature type="mutagenesis site" description="Retained in the nucleus." evidence="15">
    <original>R</original>
    <variation>A</variation>
    <location>
        <position position="113"/>
    </location>
</feature>
<feature type="mutagenesis site" description="Cytoplasmic and nuclear localization. Reduced transcriptional activity of HIF1A as for wild type." evidence="15">
    <original>R</original>
    <variation>A</variation>
    <location>
        <position position="119"/>
    </location>
</feature>
<feature type="mutagenesis site" description="Retained in the nucleus." evidence="15">
    <original>R</original>
    <variation>A</variation>
    <location>
        <position position="134"/>
    </location>
</feature>
<feature type="mutagenesis site" description="Eliminates hydroxylase activity." evidence="7">
    <original>H</original>
    <variation>A</variation>
    <location>
        <position position="297"/>
    </location>
</feature>
<feature type="mutagenesis site" description="Eliminates hydroxylase activity." evidence="7">
    <original>D</original>
    <variation>A</variation>
    <location>
        <position position="299"/>
    </location>
</feature>
<feature type="mutagenesis site" description="Eliminates hydroxylase activity." evidence="5 7">
    <original>H</original>
    <variation>A</variation>
    <location>
        <position position="358"/>
    </location>
</feature>
<feature type="mutagenesis site" description="Eliminates hydroxylase activity." evidence="7">
    <original>R</original>
    <variation>A</variation>
    <location>
        <position position="367"/>
    </location>
</feature>
<feature type="mutagenesis site" description="Eliminates hydroxylase activity on a HIF1A peptide." evidence="7">
    <original>R</original>
    <variation>K</variation>
    <location>
        <position position="367"/>
    </location>
</feature>
<feature type="sequence conflict" description="In Ref. 2; AAK82943." evidence="22" ref="2">
    <original>R</original>
    <variation>P</variation>
    <location>
        <position position="176"/>
    </location>
</feature>
<feature type="helix" evidence="27">
    <location>
        <begin position="173"/>
        <end position="180"/>
    </location>
</feature>
<feature type="helix" evidence="27">
    <location>
        <begin position="182"/>
        <end position="188"/>
    </location>
</feature>
<feature type="strand" evidence="27">
    <location>
        <begin position="190"/>
        <end position="195"/>
    </location>
</feature>
<feature type="helix" evidence="27">
    <location>
        <begin position="199"/>
        <end position="215"/>
    </location>
</feature>
<feature type="strand" evidence="27">
    <location>
        <begin position="239"/>
        <end position="243"/>
    </location>
</feature>
<feature type="helix" evidence="27">
    <location>
        <begin position="251"/>
        <end position="265"/>
    </location>
</feature>
<feature type="turn" evidence="27">
    <location>
        <begin position="266"/>
        <end position="269"/>
    </location>
</feature>
<feature type="strand" evidence="27">
    <location>
        <begin position="270"/>
        <end position="273"/>
    </location>
</feature>
<feature type="strand" evidence="27">
    <location>
        <begin position="282"/>
        <end position="287"/>
    </location>
</feature>
<feature type="strand" evidence="27">
    <location>
        <begin position="294"/>
        <end position="297"/>
    </location>
</feature>
<feature type="strand" evidence="27">
    <location>
        <begin position="305"/>
        <end position="313"/>
    </location>
</feature>
<feature type="helix" evidence="27">
    <location>
        <begin position="320"/>
        <end position="323"/>
    </location>
</feature>
<feature type="strand" evidence="27">
    <location>
        <begin position="327"/>
        <end position="329"/>
    </location>
</feature>
<feature type="strand" evidence="27">
    <location>
        <begin position="332"/>
        <end position="335"/>
    </location>
</feature>
<feature type="strand" evidence="27">
    <location>
        <begin position="338"/>
        <end position="340"/>
    </location>
</feature>
<feature type="strand" evidence="27">
    <location>
        <begin position="346"/>
        <end position="351"/>
    </location>
</feature>
<feature type="strand" evidence="27">
    <location>
        <begin position="358"/>
        <end position="360"/>
    </location>
</feature>
<feature type="strand" evidence="27">
    <location>
        <begin position="363"/>
        <end position="365"/>
    </location>
</feature>
<feature type="strand" evidence="27">
    <location>
        <begin position="367"/>
        <end position="375"/>
    </location>
</feature>
<feature type="helix" evidence="27">
    <location>
        <begin position="377"/>
        <end position="385"/>
    </location>
</feature>
<feature type="helix" evidence="27">
    <location>
        <begin position="392"/>
        <end position="395"/>
    </location>
</feature>
<protein>
    <recommendedName>
        <fullName evidence="22">Prolyl hydroxylase EGLN2</fullName>
        <ecNumber evidence="5 7 12 14 18">1.14.11.-</ecNumber>
    </recommendedName>
    <alternativeName>
        <fullName evidence="22">Egl nine homolog 2</fullName>
        <ecNumber evidence="3 5 7 12">1.14.11.29</ecNumber>
    </alternativeName>
    <alternativeName>
        <fullName evidence="21">Estrogen-induced tag 6</fullName>
        <shortName evidence="21">EIT-6</shortName>
    </alternativeName>
    <alternativeName>
        <fullName>HPH-3</fullName>
    </alternativeName>
    <alternativeName>
        <fullName>Hypoxia-inducible factor prolyl hydroxylase 1</fullName>
        <shortName>HIF-PH1</shortName>
        <shortName>HIF-prolyl hydroxylase 1</shortName>
        <shortName>HPH-1</shortName>
    </alternativeName>
    <alternativeName>
        <fullName evidence="20">Prolyl hydroxylase domain-containing protein 1</fullName>
        <shortName evidence="20">PHD1</shortName>
    </alternativeName>
</protein>
<evidence type="ECO:0000250" key="1">
    <source>
        <dbReference type="UniProtKB" id="Q91YE2"/>
    </source>
</evidence>
<evidence type="ECO:0000250" key="2">
    <source>
        <dbReference type="UniProtKB" id="Q9GZT9"/>
    </source>
</evidence>
<evidence type="ECO:0000255" key="3">
    <source>
        <dbReference type="PROSITE-ProRule" id="PRU00805"/>
    </source>
</evidence>
<evidence type="ECO:0000256" key="4">
    <source>
        <dbReference type="SAM" id="MobiDB-lite"/>
    </source>
</evidence>
<evidence type="ECO:0000269" key="5">
    <source>
    </source>
</evidence>
<evidence type="ECO:0000269" key="6">
    <source>
    </source>
</evidence>
<evidence type="ECO:0000269" key="7">
    <source>
    </source>
</evidence>
<evidence type="ECO:0000269" key="8">
    <source>
    </source>
</evidence>
<evidence type="ECO:0000269" key="9">
    <source>
    </source>
</evidence>
<evidence type="ECO:0000269" key="10">
    <source>
    </source>
</evidence>
<evidence type="ECO:0000269" key="11">
    <source>
    </source>
</evidence>
<evidence type="ECO:0000269" key="12">
    <source>
    </source>
</evidence>
<evidence type="ECO:0000269" key="13">
    <source>
    </source>
</evidence>
<evidence type="ECO:0000269" key="14">
    <source>
    </source>
</evidence>
<evidence type="ECO:0000269" key="15">
    <source>
    </source>
</evidence>
<evidence type="ECO:0000269" key="16">
    <source>
    </source>
</evidence>
<evidence type="ECO:0000269" key="17">
    <source>
    </source>
</evidence>
<evidence type="ECO:0000269" key="18">
    <source>
    </source>
</evidence>
<evidence type="ECO:0000269" key="19">
    <source>
    </source>
</evidence>
<evidence type="ECO:0000303" key="20">
    <source>
    </source>
</evidence>
<evidence type="ECO:0000303" key="21">
    <source>
    </source>
</evidence>
<evidence type="ECO:0000305" key="22"/>
<evidence type="ECO:0000312" key="23">
    <source>
        <dbReference type="HGNC" id="HGNC:14660"/>
    </source>
</evidence>
<evidence type="ECO:0000312" key="24">
    <source>
        <dbReference type="PDB" id="5V1B"/>
    </source>
</evidence>
<evidence type="ECO:0007744" key="25">
    <source>
        <dbReference type="PDB" id="5V1B"/>
    </source>
</evidence>
<evidence type="ECO:0007744" key="26">
    <source>
    </source>
</evidence>
<evidence type="ECO:0007829" key="27">
    <source>
        <dbReference type="PDB" id="5V1B"/>
    </source>
</evidence>